<sequence length="379" mass="42468">MTNIRKTHPLLKIVNSSFVDLPAPSSLSSWWNFGSLLGVCLAVQILTGLFLAMHYTSDTATAFNSVTHICRDVNYGWVLRYLHANGASMFFICLYLHVGRGLYYGSYTYSETWNVGILLLFAVMATAFMGYVLPWGQMSFWGATVITNLLSAIPYIGTDLVQWIWGGFSVDKATLTRFFAFHFLLPFVVAALVMVDLLFLHETGSNNPTGIPSDSDMIPFHPYYTIKDILGFLVMLTALSTLVLFSPDLLGDPDNYTPANPLSTPPHIKPEWYFLFAYAILRSIPNKLGGVLALVLSILILAIVPMLHVSKQRSMMFRPLSQCLFWLLVAVLFTLTWIGGQPVEHPYIIIGQMASVLYFLIILVLMPLTSIVENRLLSW</sequence>
<name>CYB_CARPS</name>
<dbReference type="EMBL" id="AF187025">
    <property type="protein sequence ID" value="AAG25906.1"/>
    <property type="molecule type" value="Genomic_DNA"/>
</dbReference>
<dbReference type="SMR" id="Q9GAN2"/>
<dbReference type="GO" id="GO:0005743">
    <property type="term" value="C:mitochondrial inner membrane"/>
    <property type="evidence" value="ECO:0007669"/>
    <property type="project" value="UniProtKB-SubCell"/>
</dbReference>
<dbReference type="GO" id="GO:0045275">
    <property type="term" value="C:respiratory chain complex III"/>
    <property type="evidence" value="ECO:0007669"/>
    <property type="project" value="InterPro"/>
</dbReference>
<dbReference type="GO" id="GO:0046872">
    <property type="term" value="F:metal ion binding"/>
    <property type="evidence" value="ECO:0007669"/>
    <property type="project" value="UniProtKB-KW"/>
</dbReference>
<dbReference type="GO" id="GO:0008121">
    <property type="term" value="F:ubiquinol-cytochrome-c reductase activity"/>
    <property type="evidence" value="ECO:0007669"/>
    <property type="project" value="InterPro"/>
</dbReference>
<dbReference type="GO" id="GO:0006122">
    <property type="term" value="P:mitochondrial electron transport, ubiquinol to cytochrome c"/>
    <property type="evidence" value="ECO:0007669"/>
    <property type="project" value="TreeGrafter"/>
</dbReference>
<dbReference type="CDD" id="cd00290">
    <property type="entry name" value="cytochrome_b_C"/>
    <property type="match status" value="1"/>
</dbReference>
<dbReference type="CDD" id="cd00284">
    <property type="entry name" value="Cytochrome_b_N"/>
    <property type="match status" value="1"/>
</dbReference>
<dbReference type="FunFam" id="1.20.810.10:FF:000002">
    <property type="entry name" value="Cytochrome b"/>
    <property type="match status" value="1"/>
</dbReference>
<dbReference type="Gene3D" id="1.20.810.10">
    <property type="entry name" value="Cytochrome Bc1 Complex, Chain C"/>
    <property type="match status" value="1"/>
</dbReference>
<dbReference type="InterPro" id="IPR005798">
    <property type="entry name" value="Cyt_b/b6_C"/>
</dbReference>
<dbReference type="InterPro" id="IPR036150">
    <property type="entry name" value="Cyt_b/b6_C_sf"/>
</dbReference>
<dbReference type="InterPro" id="IPR005797">
    <property type="entry name" value="Cyt_b/b6_N"/>
</dbReference>
<dbReference type="InterPro" id="IPR027387">
    <property type="entry name" value="Cytb/b6-like_sf"/>
</dbReference>
<dbReference type="InterPro" id="IPR030689">
    <property type="entry name" value="Cytochrome_b"/>
</dbReference>
<dbReference type="InterPro" id="IPR048260">
    <property type="entry name" value="Cytochrome_b_C_euk/bac"/>
</dbReference>
<dbReference type="InterPro" id="IPR048259">
    <property type="entry name" value="Cytochrome_b_N_euk/bac"/>
</dbReference>
<dbReference type="InterPro" id="IPR016174">
    <property type="entry name" value="Di-haem_cyt_TM"/>
</dbReference>
<dbReference type="PANTHER" id="PTHR19271">
    <property type="entry name" value="CYTOCHROME B"/>
    <property type="match status" value="1"/>
</dbReference>
<dbReference type="PANTHER" id="PTHR19271:SF16">
    <property type="entry name" value="CYTOCHROME B"/>
    <property type="match status" value="1"/>
</dbReference>
<dbReference type="Pfam" id="PF00032">
    <property type="entry name" value="Cytochrom_B_C"/>
    <property type="match status" value="1"/>
</dbReference>
<dbReference type="Pfam" id="PF00033">
    <property type="entry name" value="Cytochrome_B"/>
    <property type="match status" value="1"/>
</dbReference>
<dbReference type="PIRSF" id="PIRSF038885">
    <property type="entry name" value="COB"/>
    <property type="match status" value="1"/>
</dbReference>
<dbReference type="SUPFAM" id="SSF81648">
    <property type="entry name" value="a domain/subunit of cytochrome bc1 complex (Ubiquinol-cytochrome c reductase)"/>
    <property type="match status" value="1"/>
</dbReference>
<dbReference type="SUPFAM" id="SSF81342">
    <property type="entry name" value="Transmembrane di-heme cytochromes"/>
    <property type="match status" value="1"/>
</dbReference>
<dbReference type="PROSITE" id="PS51003">
    <property type="entry name" value="CYTB_CTER"/>
    <property type="match status" value="1"/>
</dbReference>
<dbReference type="PROSITE" id="PS51002">
    <property type="entry name" value="CYTB_NTER"/>
    <property type="match status" value="1"/>
</dbReference>
<evidence type="ECO:0000250" key="1"/>
<evidence type="ECO:0000250" key="2">
    <source>
        <dbReference type="UniProtKB" id="P00157"/>
    </source>
</evidence>
<evidence type="ECO:0000255" key="3">
    <source>
        <dbReference type="PROSITE-ProRule" id="PRU00967"/>
    </source>
</evidence>
<evidence type="ECO:0000255" key="4">
    <source>
        <dbReference type="PROSITE-ProRule" id="PRU00968"/>
    </source>
</evidence>
<reference key="1">
    <citation type="journal article" date="1999" name="J. Mammal.">
        <title>Systematics of the genera Carollia and Rhinophylla based on the cytochrome b gene.</title>
        <authorList>
            <person name="Wright A.J."/>
            <person name="Van Den Bussche R.A."/>
            <person name="Lim B.K."/>
            <person name="Engstrom M.D."/>
            <person name="Baker R.J."/>
        </authorList>
    </citation>
    <scope>NUCLEOTIDE SEQUENCE [GENOMIC DNA]</scope>
    <source>
        <strain>Isolate TK 17466</strain>
    </source>
</reference>
<proteinExistence type="inferred from homology"/>
<protein>
    <recommendedName>
        <fullName>Cytochrome b</fullName>
    </recommendedName>
    <alternativeName>
        <fullName>Complex III subunit 3</fullName>
    </alternativeName>
    <alternativeName>
        <fullName>Complex III subunit III</fullName>
    </alternativeName>
    <alternativeName>
        <fullName>Cytochrome b-c1 complex subunit 3</fullName>
    </alternativeName>
    <alternativeName>
        <fullName>Ubiquinol-cytochrome-c reductase complex cytochrome b subunit</fullName>
    </alternativeName>
</protein>
<accession>Q9GAN2</accession>
<comment type="function">
    <text evidence="2">Component of the ubiquinol-cytochrome c reductase complex (complex III or cytochrome b-c1 complex) that is part of the mitochondrial respiratory chain. The b-c1 complex mediates electron transfer from ubiquinol to cytochrome c. Contributes to the generation of a proton gradient across the mitochondrial membrane that is then used for ATP synthesis.</text>
</comment>
<comment type="cofactor">
    <cofactor evidence="2">
        <name>heme b</name>
        <dbReference type="ChEBI" id="CHEBI:60344"/>
    </cofactor>
    <text evidence="2">Binds 2 heme b groups non-covalently.</text>
</comment>
<comment type="subunit">
    <text evidence="2">The cytochrome bc1 complex contains 11 subunits: 3 respiratory subunits (MT-CYB, CYC1 and UQCRFS1), 2 core proteins (UQCRC1 and UQCRC2) and 6 low-molecular weight proteins (UQCRH/QCR6, UQCRB/QCR7, UQCRQ/QCR8, UQCR10/QCR9, UQCR11/QCR10 and a cleavage product of UQCRFS1). This cytochrome bc1 complex then forms a dimer.</text>
</comment>
<comment type="subcellular location">
    <subcellularLocation>
        <location evidence="2">Mitochondrion inner membrane</location>
        <topology evidence="2">Multi-pass membrane protein</topology>
    </subcellularLocation>
</comment>
<comment type="miscellaneous">
    <text evidence="1">Heme 1 (or BL or b562) is low-potential and absorbs at about 562 nm, and heme 2 (or BH or b566) is high-potential and absorbs at about 566 nm.</text>
</comment>
<comment type="similarity">
    <text evidence="3 4">Belongs to the cytochrome b family.</text>
</comment>
<comment type="caution">
    <text evidence="2">The full-length protein contains only eight transmembrane helices, not nine as predicted by bioinformatics tools.</text>
</comment>
<feature type="chain" id="PRO_0000060737" description="Cytochrome b">
    <location>
        <begin position="1"/>
        <end position="379"/>
    </location>
</feature>
<feature type="transmembrane region" description="Helical" evidence="2">
    <location>
        <begin position="33"/>
        <end position="53"/>
    </location>
</feature>
<feature type="transmembrane region" description="Helical" evidence="2">
    <location>
        <begin position="77"/>
        <end position="98"/>
    </location>
</feature>
<feature type="transmembrane region" description="Helical" evidence="2">
    <location>
        <begin position="113"/>
        <end position="133"/>
    </location>
</feature>
<feature type="transmembrane region" description="Helical" evidence="2">
    <location>
        <begin position="178"/>
        <end position="198"/>
    </location>
</feature>
<feature type="transmembrane region" description="Helical" evidence="2">
    <location>
        <begin position="226"/>
        <end position="246"/>
    </location>
</feature>
<feature type="transmembrane region" description="Helical" evidence="2">
    <location>
        <begin position="288"/>
        <end position="308"/>
    </location>
</feature>
<feature type="transmembrane region" description="Helical" evidence="2">
    <location>
        <begin position="320"/>
        <end position="340"/>
    </location>
</feature>
<feature type="transmembrane region" description="Helical" evidence="2">
    <location>
        <begin position="347"/>
        <end position="367"/>
    </location>
</feature>
<feature type="binding site" description="axial binding residue" evidence="2">
    <location>
        <position position="83"/>
    </location>
    <ligand>
        <name>heme b</name>
        <dbReference type="ChEBI" id="CHEBI:60344"/>
        <label>b562</label>
    </ligand>
    <ligandPart>
        <name>Fe</name>
        <dbReference type="ChEBI" id="CHEBI:18248"/>
    </ligandPart>
</feature>
<feature type="binding site" description="axial binding residue" evidence="2">
    <location>
        <position position="97"/>
    </location>
    <ligand>
        <name>heme b</name>
        <dbReference type="ChEBI" id="CHEBI:60344"/>
        <label>b566</label>
    </ligand>
    <ligandPart>
        <name>Fe</name>
        <dbReference type="ChEBI" id="CHEBI:18248"/>
    </ligandPart>
</feature>
<feature type="binding site" description="axial binding residue" evidence="2">
    <location>
        <position position="182"/>
    </location>
    <ligand>
        <name>heme b</name>
        <dbReference type="ChEBI" id="CHEBI:60344"/>
        <label>b562</label>
    </ligand>
    <ligandPart>
        <name>Fe</name>
        <dbReference type="ChEBI" id="CHEBI:18248"/>
    </ligandPart>
</feature>
<feature type="binding site" evidence="2">
    <location>
        <position position="201"/>
    </location>
    <ligand>
        <name>a ubiquinone</name>
        <dbReference type="ChEBI" id="CHEBI:16389"/>
    </ligand>
</feature>
<geneLocation type="mitochondrion"/>
<keyword id="KW-0249">Electron transport</keyword>
<keyword id="KW-0349">Heme</keyword>
<keyword id="KW-0408">Iron</keyword>
<keyword id="KW-0472">Membrane</keyword>
<keyword id="KW-0479">Metal-binding</keyword>
<keyword id="KW-0496">Mitochondrion</keyword>
<keyword id="KW-0999">Mitochondrion inner membrane</keyword>
<keyword id="KW-0679">Respiratory chain</keyword>
<keyword id="KW-0812">Transmembrane</keyword>
<keyword id="KW-1133">Transmembrane helix</keyword>
<keyword id="KW-0813">Transport</keyword>
<keyword id="KW-0830">Ubiquinone</keyword>
<gene>
    <name type="primary">MT-CYB</name>
    <name type="synonym">COB</name>
    <name type="synonym">CYTB</name>
    <name type="synonym">MTCYB</name>
</gene>
<organism>
    <name type="scientific">Carollia perspicillata</name>
    <name type="common">Seba's short-tailed bat</name>
    <dbReference type="NCBI Taxonomy" id="40233"/>
    <lineage>
        <taxon>Eukaryota</taxon>
        <taxon>Metazoa</taxon>
        <taxon>Chordata</taxon>
        <taxon>Craniata</taxon>
        <taxon>Vertebrata</taxon>
        <taxon>Euteleostomi</taxon>
        <taxon>Mammalia</taxon>
        <taxon>Eutheria</taxon>
        <taxon>Laurasiatheria</taxon>
        <taxon>Chiroptera</taxon>
        <taxon>Yangochiroptera</taxon>
        <taxon>Phyllostomidae</taxon>
        <taxon>Carolliinae</taxon>
        <taxon>Carollia</taxon>
    </lineage>
</organism>